<sequence length="313" mass="35459">MSWANESITGEFVLLGFSDQPWLEFPLFVVFLTSYIVTIFGNLNIILVSHLDPKLHTPMYFFLTNLSVIDLCYITCTVPQMLVNLRSIRKVISFGGCVVQLFMFLALGATECVLLPVMSFDRFVAICRPLHYSVIMHQRLCLQLAAVSWIIGFGNSVWLSILTLQLPRCGHYVIDHFLCEVPALLKLSCVDVTANEAELFFVSVFFHLTPLSLILTSYAFIARAILKIQSAEGRQKAFGTCSSHLIVVSLFYGTALSVYFLPPSPHSKNRRKMVPLFYGIIAPMLNPLIYTLRNKEVKDAFKRLIKRVFLSKN</sequence>
<organism>
    <name type="scientific">Mus musculus</name>
    <name type="common">Mouse</name>
    <dbReference type="NCBI Taxonomy" id="10090"/>
    <lineage>
        <taxon>Eukaryota</taxon>
        <taxon>Metazoa</taxon>
        <taxon>Chordata</taxon>
        <taxon>Craniata</taxon>
        <taxon>Vertebrata</taxon>
        <taxon>Euteleostomi</taxon>
        <taxon>Mammalia</taxon>
        <taxon>Eutheria</taxon>
        <taxon>Euarchontoglires</taxon>
        <taxon>Glires</taxon>
        <taxon>Rodentia</taxon>
        <taxon>Myomorpha</taxon>
        <taxon>Muroidea</taxon>
        <taxon>Muridae</taxon>
        <taxon>Murinae</taxon>
        <taxon>Mus</taxon>
        <taxon>Mus</taxon>
    </lineage>
</organism>
<keyword id="KW-1003">Cell membrane</keyword>
<keyword id="KW-1015">Disulfide bond</keyword>
<keyword id="KW-0297">G-protein coupled receptor</keyword>
<keyword id="KW-0325">Glycoprotein</keyword>
<keyword id="KW-0472">Membrane</keyword>
<keyword id="KW-0552">Olfaction</keyword>
<keyword id="KW-0675">Receptor</keyword>
<keyword id="KW-1185">Reference proteome</keyword>
<keyword id="KW-0716">Sensory transduction</keyword>
<keyword id="KW-0807">Transducer</keyword>
<keyword id="KW-0812">Transmembrane</keyword>
<keyword id="KW-1133">Transmembrane helix</keyword>
<accession>Q60890</accession>
<accession>Q7TQU3</accession>
<accession>Q8VFH1</accession>
<dbReference type="EMBL" id="AY073555">
    <property type="protein sequence ID" value="AAL61218.1"/>
    <property type="molecule type" value="Genomic_DNA"/>
</dbReference>
<dbReference type="EMBL" id="AY318571">
    <property type="protein sequence ID" value="AAP71746.1"/>
    <property type="molecule type" value="Genomic_DNA"/>
</dbReference>
<dbReference type="EMBL" id="AL589651">
    <property type="status" value="NOT_ANNOTATED_CDS"/>
    <property type="molecule type" value="Genomic_DNA"/>
</dbReference>
<dbReference type="EMBL" id="U28779">
    <property type="protein sequence ID" value="AAC52402.1"/>
    <property type="molecule type" value="Genomic_DNA"/>
</dbReference>
<dbReference type="CCDS" id="CCDS26283.1"/>
<dbReference type="RefSeq" id="NP_666753.2">
    <property type="nucleotide sequence ID" value="NM_146542.2"/>
</dbReference>
<dbReference type="SMR" id="Q60890"/>
<dbReference type="FunCoup" id="Q60890">
    <property type="interactions" value="1275"/>
</dbReference>
<dbReference type="STRING" id="10090.ENSMUSP00000146091"/>
<dbReference type="GlyCosmos" id="Q60890">
    <property type="glycosylation" value="1 site, No reported glycans"/>
</dbReference>
<dbReference type="GlyGen" id="Q60890">
    <property type="glycosylation" value="1 site"/>
</dbReference>
<dbReference type="PhosphoSitePlus" id="Q60890"/>
<dbReference type="PaxDb" id="10090-ENSMUSP00000043099"/>
<dbReference type="Antibodypedia" id="67797">
    <property type="antibodies" value="63 antibodies from 16 providers"/>
</dbReference>
<dbReference type="DNASU" id="218066"/>
<dbReference type="Ensembl" id="ENSMUST00000043081.3">
    <property type="protein sequence ID" value="ENSMUSP00000043099.3"/>
    <property type="gene ID" value="ENSMUSG00000036658.5"/>
</dbReference>
<dbReference type="Ensembl" id="ENSMUST00000205631.3">
    <property type="protein sequence ID" value="ENSMUSP00000146091.2"/>
    <property type="gene ID" value="ENSMUSG00000036658.5"/>
</dbReference>
<dbReference type="GeneID" id="218066"/>
<dbReference type="KEGG" id="mmu:218066"/>
<dbReference type="UCSC" id="uc007pqw.1">
    <property type="organism name" value="mouse"/>
</dbReference>
<dbReference type="AGR" id="MGI:104715"/>
<dbReference type="CTD" id="26212"/>
<dbReference type="MGI" id="MGI:104715">
    <property type="gene designation" value="Or2b6"/>
</dbReference>
<dbReference type="VEuPathDB" id="HostDB:ENSMUSG00000036658"/>
<dbReference type="eggNOG" id="ENOG502SI2C">
    <property type="taxonomic scope" value="Eukaryota"/>
</dbReference>
<dbReference type="GeneTree" id="ENSGT01130000278264"/>
<dbReference type="HOGENOM" id="CLU_012526_1_2_1"/>
<dbReference type="InParanoid" id="Q60890"/>
<dbReference type="OMA" id="QMLVNLC"/>
<dbReference type="OrthoDB" id="5950740at2759"/>
<dbReference type="PhylomeDB" id="Q60890"/>
<dbReference type="TreeFam" id="TF336512"/>
<dbReference type="BioGRID-ORCS" id="218066">
    <property type="hits" value="0 hits in 73 CRISPR screens"/>
</dbReference>
<dbReference type="ChiTaRS" id="Olfr11">
    <property type="organism name" value="mouse"/>
</dbReference>
<dbReference type="PRO" id="PR:Q60890"/>
<dbReference type="Proteomes" id="UP000000589">
    <property type="component" value="Chromosome 13"/>
</dbReference>
<dbReference type="RNAct" id="Q60890">
    <property type="molecule type" value="protein"/>
</dbReference>
<dbReference type="Bgee" id="ENSMUSG00000036658">
    <property type="expression patterns" value="Expressed in white adipose tissue"/>
</dbReference>
<dbReference type="GO" id="GO:0016020">
    <property type="term" value="C:membrane"/>
    <property type="evidence" value="ECO:0000247"/>
    <property type="project" value="MGI"/>
</dbReference>
<dbReference type="GO" id="GO:0005886">
    <property type="term" value="C:plasma membrane"/>
    <property type="evidence" value="ECO:0007669"/>
    <property type="project" value="UniProtKB-SubCell"/>
</dbReference>
<dbReference type="GO" id="GO:0004930">
    <property type="term" value="F:G protein-coupled receptor activity"/>
    <property type="evidence" value="ECO:0007669"/>
    <property type="project" value="UniProtKB-KW"/>
</dbReference>
<dbReference type="GO" id="GO:0004984">
    <property type="term" value="F:olfactory receptor activity"/>
    <property type="evidence" value="ECO:0000247"/>
    <property type="project" value="MGI"/>
</dbReference>
<dbReference type="GO" id="GO:0007186">
    <property type="term" value="P:G protein-coupled receptor signaling pathway"/>
    <property type="evidence" value="ECO:0000247"/>
    <property type="project" value="MGI"/>
</dbReference>
<dbReference type="GO" id="GO:0007608">
    <property type="term" value="P:sensory perception of smell"/>
    <property type="evidence" value="ECO:0000247"/>
    <property type="project" value="MGI"/>
</dbReference>
<dbReference type="CDD" id="cd15947">
    <property type="entry name" value="7tmA_OR2B-like"/>
    <property type="match status" value="1"/>
</dbReference>
<dbReference type="FunFam" id="1.20.1070.10:FF:000005">
    <property type="entry name" value="Olfactory receptor"/>
    <property type="match status" value="1"/>
</dbReference>
<dbReference type="Gene3D" id="1.20.1070.10">
    <property type="entry name" value="Rhodopsin 7-helix transmembrane proteins"/>
    <property type="match status" value="1"/>
</dbReference>
<dbReference type="InterPro" id="IPR000276">
    <property type="entry name" value="GPCR_Rhodpsn"/>
</dbReference>
<dbReference type="InterPro" id="IPR017452">
    <property type="entry name" value="GPCR_Rhodpsn_7TM"/>
</dbReference>
<dbReference type="InterPro" id="IPR000725">
    <property type="entry name" value="Olfact_rcpt"/>
</dbReference>
<dbReference type="PANTHER" id="PTHR26453">
    <property type="entry name" value="OLFACTORY RECEPTOR"/>
    <property type="match status" value="1"/>
</dbReference>
<dbReference type="Pfam" id="PF13853">
    <property type="entry name" value="7tm_4"/>
    <property type="match status" value="1"/>
</dbReference>
<dbReference type="PRINTS" id="PR00237">
    <property type="entry name" value="GPCRRHODOPSN"/>
</dbReference>
<dbReference type="PRINTS" id="PR00245">
    <property type="entry name" value="OLFACTORYR"/>
</dbReference>
<dbReference type="SUPFAM" id="SSF81321">
    <property type="entry name" value="Family A G protein-coupled receptor-like"/>
    <property type="match status" value="1"/>
</dbReference>
<dbReference type="PROSITE" id="PS00237">
    <property type="entry name" value="G_PROTEIN_RECEP_F1_1"/>
    <property type="match status" value="1"/>
</dbReference>
<dbReference type="PROSITE" id="PS50262">
    <property type="entry name" value="G_PROTEIN_RECEP_F1_2"/>
    <property type="match status" value="1"/>
</dbReference>
<feature type="chain" id="PRO_0000150810" description="Olfactory receptor 2B6">
    <location>
        <begin position="1"/>
        <end position="313"/>
    </location>
</feature>
<feature type="topological domain" description="Extracellular" evidence="1">
    <location>
        <begin position="1"/>
        <end position="27"/>
    </location>
</feature>
<feature type="transmembrane region" description="Helical; Name=1" evidence="1">
    <location>
        <begin position="28"/>
        <end position="48"/>
    </location>
</feature>
<feature type="topological domain" description="Cytoplasmic" evidence="1">
    <location>
        <begin position="49"/>
        <end position="57"/>
    </location>
</feature>
<feature type="transmembrane region" description="Helical; Name=2" evidence="1">
    <location>
        <begin position="58"/>
        <end position="78"/>
    </location>
</feature>
<feature type="topological domain" description="Extracellular" evidence="1">
    <location>
        <begin position="79"/>
        <end position="97"/>
    </location>
</feature>
<feature type="transmembrane region" description="Helical; Name=3" evidence="1">
    <location>
        <begin position="98"/>
        <end position="118"/>
    </location>
</feature>
<feature type="topological domain" description="Cytoplasmic" evidence="1">
    <location>
        <begin position="119"/>
        <end position="143"/>
    </location>
</feature>
<feature type="transmembrane region" description="Helical; Name=4" evidence="1">
    <location>
        <begin position="144"/>
        <end position="164"/>
    </location>
</feature>
<feature type="topological domain" description="Extracellular" evidence="1">
    <location>
        <begin position="165"/>
        <end position="200"/>
    </location>
</feature>
<feature type="transmembrane region" description="Helical; Name=5" evidence="1">
    <location>
        <begin position="201"/>
        <end position="221"/>
    </location>
</feature>
<feature type="topological domain" description="Cytoplasmic" evidence="1">
    <location>
        <begin position="222"/>
        <end position="244"/>
    </location>
</feature>
<feature type="transmembrane region" description="Helical; Name=6" evidence="1">
    <location>
        <begin position="245"/>
        <end position="265"/>
    </location>
</feature>
<feature type="topological domain" description="Extracellular" evidence="1">
    <location>
        <begin position="266"/>
        <end position="271"/>
    </location>
</feature>
<feature type="transmembrane region" description="Helical; Name=7" evidence="1">
    <location>
        <begin position="272"/>
        <end position="292"/>
    </location>
</feature>
<feature type="topological domain" description="Cytoplasmic" evidence="1">
    <location>
        <begin position="293"/>
        <end position="313"/>
    </location>
</feature>
<feature type="glycosylation site" description="N-linked (GlcNAc...) asparagine" evidence="1">
    <location>
        <position position="5"/>
    </location>
</feature>
<feature type="disulfide bond" evidence="2">
    <location>
        <begin position="97"/>
        <end position="189"/>
    </location>
</feature>
<feature type="sequence conflict" description="In Ref. 1 and 2." evidence="3" ref="1 2">
    <original>F</original>
    <variation>L</variation>
    <location>
        <position position="260"/>
    </location>
</feature>
<comment type="function">
    <text evidence="3">Odorant receptor.</text>
</comment>
<comment type="subcellular location">
    <subcellularLocation>
        <location evidence="3">Cell membrane</location>
        <topology evidence="1">Multi-pass membrane protein</topology>
    </subcellularLocation>
</comment>
<comment type="similarity">
    <text evidence="2">Belongs to the G-protein coupled receptor 1 family.</text>
</comment>
<proteinExistence type="inferred from homology"/>
<protein>
    <recommendedName>
        <fullName evidence="3">Olfactory receptor 2B6</fullName>
    </recommendedName>
    <alternativeName>
        <fullName>Odorant receptor M49</fullName>
    </alternativeName>
    <alternativeName>
        <fullName evidence="4">Olfactory receptor 11</fullName>
    </alternativeName>
    <alternativeName>
        <fullName evidence="4">Olfactory receptor 256-11</fullName>
    </alternativeName>
</protein>
<evidence type="ECO:0000255" key="1"/>
<evidence type="ECO:0000255" key="2">
    <source>
        <dbReference type="PROSITE-ProRule" id="PRU00521"/>
    </source>
</evidence>
<evidence type="ECO:0000305" key="3"/>
<evidence type="ECO:0000312" key="4">
    <source>
        <dbReference type="MGI" id="MGI:104715"/>
    </source>
</evidence>
<name>OR2B6_MOUSE</name>
<gene>
    <name evidence="4" type="primary">Or2b6</name>
    <name evidence="4" type="synonym">Mor256-11</name>
    <name evidence="4" type="synonym">Olfr11</name>
</gene>
<reference key="1">
    <citation type="journal article" date="2002" name="Nat. Neurosci.">
        <title>The olfactory receptor gene superfamily of the mouse.</title>
        <authorList>
            <person name="Zhang X."/>
            <person name="Firestein S."/>
        </authorList>
    </citation>
    <scope>NUCLEOTIDE SEQUENCE [GENOMIC DNA]</scope>
</reference>
<reference key="2">
    <citation type="journal article" date="2002" name="Hum. Mol. Genet.">
        <title>Different evolutionary processes shaped the mouse and human olfactory receptor gene families.</title>
        <authorList>
            <person name="Young J.M."/>
            <person name="Friedman C."/>
            <person name="Williams E.M."/>
            <person name="Ross J.A."/>
            <person name="Tonnes-Priddy L."/>
            <person name="Trask B.J."/>
        </authorList>
    </citation>
    <scope>NUCLEOTIDE SEQUENCE [GENOMIC DNA]</scope>
</reference>
<reference key="3">
    <citation type="journal article" date="2002" name="Hum. Mol. Genet.">
        <authorList>
            <person name="Young J.M."/>
            <person name="Friedman C."/>
            <person name="Williams E.M."/>
            <person name="Ross J.A."/>
            <person name="Tonnes-Priddy L."/>
            <person name="Trask B.J."/>
        </authorList>
    </citation>
    <scope>ERRATUM OF PUBMED:11875048</scope>
</reference>
<reference key="4">
    <citation type="journal article" date="2003" name="Genome Biol.">
        <title>Odorant receptor expressed sequence tags demonstrate olfactory expression of over 400 genes, extensive alternate splicing and unequal expression levels.</title>
        <authorList>
            <person name="Young J.M."/>
            <person name="Shykind B.M."/>
            <person name="Lane R.P."/>
            <person name="Tonnes-Priddy L."/>
            <person name="Ross J.A."/>
            <person name="Walker M."/>
            <person name="Williams E.M."/>
            <person name="Trask B.J."/>
        </authorList>
    </citation>
    <scope>NUCLEOTIDE SEQUENCE [GENOMIC DNA]</scope>
</reference>
<reference key="5">
    <citation type="journal article" date="2009" name="PLoS Biol.">
        <title>Lineage-specific biology revealed by a finished genome assembly of the mouse.</title>
        <authorList>
            <person name="Church D.M."/>
            <person name="Goodstadt L."/>
            <person name="Hillier L.W."/>
            <person name="Zody M.C."/>
            <person name="Goldstein S."/>
            <person name="She X."/>
            <person name="Bult C.J."/>
            <person name="Agarwala R."/>
            <person name="Cherry J.L."/>
            <person name="DiCuccio M."/>
            <person name="Hlavina W."/>
            <person name="Kapustin Y."/>
            <person name="Meric P."/>
            <person name="Maglott D."/>
            <person name="Birtle Z."/>
            <person name="Marques A.C."/>
            <person name="Graves T."/>
            <person name="Zhou S."/>
            <person name="Teague B."/>
            <person name="Potamousis K."/>
            <person name="Churas C."/>
            <person name="Place M."/>
            <person name="Herschleb J."/>
            <person name="Runnheim R."/>
            <person name="Forrest D."/>
            <person name="Amos-Landgraf J."/>
            <person name="Schwartz D.C."/>
            <person name="Cheng Z."/>
            <person name="Lindblad-Toh K."/>
            <person name="Eichler E.E."/>
            <person name="Ponting C.P."/>
        </authorList>
    </citation>
    <scope>NUCLEOTIDE SEQUENCE [LARGE SCALE GENOMIC DNA]</scope>
    <source>
        <strain>C57BL/6J</strain>
    </source>
</reference>
<reference key="6">
    <citation type="journal article" date="1996" name="Proc. Natl. Acad. Sci. U.S.A.">
        <title>The chromosomal distribution of mouse odorant receptor genes.</title>
        <authorList>
            <person name="Sullivan S.L."/>
            <person name="Adamson M.C."/>
            <person name="Ressler K.J."/>
            <person name="Kozak C.A."/>
            <person name="Buck L.B."/>
        </authorList>
    </citation>
    <scope>NUCLEOTIDE SEQUENCE [GENOMIC DNA] OF 128-239</scope>
    <source>
        <strain>C57BL/6J</strain>
    </source>
</reference>